<accession>Q9FGK9</accession>
<protein>
    <recommendedName>
        <fullName evidence="5">Protein transport protein SEC16A homolog</fullName>
    </recommendedName>
    <alternativeName>
        <fullName evidence="4">Protein MAIGO 5</fullName>
    </alternativeName>
</protein>
<feature type="chain" id="PRO_0000430536" description="Protein transport protein SEC16A homolog">
    <location>
        <begin position="1"/>
        <end position="1350"/>
    </location>
</feature>
<feature type="region of interest" description="Disordered" evidence="2">
    <location>
        <begin position="26"/>
        <end position="45"/>
    </location>
</feature>
<feature type="region of interest" description="Disordered" evidence="2">
    <location>
        <begin position="73"/>
        <end position="97"/>
    </location>
</feature>
<feature type="region of interest" description="Disordered" evidence="2">
    <location>
        <begin position="964"/>
        <end position="1063"/>
    </location>
</feature>
<feature type="region of interest" description="Disordered" evidence="2">
    <location>
        <begin position="1118"/>
        <end position="1216"/>
    </location>
</feature>
<feature type="region of interest" description="Disordered" evidence="2">
    <location>
        <begin position="1235"/>
        <end position="1350"/>
    </location>
</feature>
<feature type="compositionally biased region" description="Basic and acidic residues" evidence="2">
    <location>
        <begin position="35"/>
        <end position="45"/>
    </location>
</feature>
<feature type="compositionally biased region" description="Polar residues" evidence="2">
    <location>
        <begin position="970"/>
        <end position="1002"/>
    </location>
</feature>
<feature type="compositionally biased region" description="Low complexity" evidence="2">
    <location>
        <begin position="1150"/>
        <end position="1168"/>
    </location>
</feature>
<feature type="compositionally biased region" description="Polar residues" evidence="2">
    <location>
        <begin position="1195"/>
        <end position="1210"/>
    </location>
</feature>
<feature type="compositionally biased region" description="Polar residues" evidence="2">
    <location>
        <begin position="1289"/>
        <end position="1316"/>
    </location>
</feature>
<feature type="compositionally biased region" description="Low complexity" evidence="2">
    <location>
        <begin position="1317"/>
        <end position="1343"/>
    </location>
</feature>
<feature type="modified residue" description="Phosphoserine" evidence="1">
    <location>
        <position position="43"/>
    </location>
</feature>
<comment type="function">
    <text evidence="3">Required for efficient protein export from the endoplasmic reticulum (ER) to the Golgi by regulating COPII coat dynamics at the ER. Functions as a scaffold and regulator of COPII coat assembly at ER exit sites.</text>
</comment>
<comment type="subunit">
    <text evidence="3">Interacts with SEC13A, SEC13B and SEC31A.</text>
</comment>
<comment type="subcellular location">
    <subcellularLocation>
        <location evidence="3">Golgi apparatus</location>
        <location evidence="3">Golgi stack</location>
    </subcellularLocation>
    <subcellularLocation>
        <location evidence="3">Endoplasmic reticulum</location>
    </subcellularLocation>
    <text evidence="3">Localizes at Golgi-associated cup-shaped endoplasmic reticulum exit sites.</text>
</comment>
<comment type="disruption phenotype">
    <text evidence="3">No visible phenotype under normal growth conditions, but dry seeds of mutant plants accumulate the precursors of the two major storage proteins albumin 2S and globulin 12S.</text>
</comment>
<comment type="similarity">
    <text evidence="5">Belongs to the SEC16 family.</text>
</comment>
<dbReference type="EMBL" id="AB025628">
    <property type="protein sequence ID" value="BAB09074.1"/>
    <property type="molecule type" value="Genomic_DNA"/>
</dbReference>
<dbReference type="EMBL" id="CP002688">
    <property type="protein sequence ID" value="AED95524.1"/>
    <property type="molecule type" value="Genomic_DNA"/>
</dbReference>
<dbReference type="RefSeq" id="NP_199559.1">
    <property type="nucleotide sequence ID" value="NM_124121.3"/>
</dbReference>
<dbReference type="FunCoup" id="Q9FGK9">
    <property type="interactions" value="1630"/>
</dbReference>
<dbReference type="STRING" id="3702.Q9FGK9"/>
<dbReference type="GlyGen" id="Q9FGK9">
    <property type="glycosylation" value="1 site"/>
</dbReference>
<dbReference type="iPTMnet" id="Q9FGK9"/>
<dbReference type="PaxDb" id="3702-AT5G47480.1"/>
<dbReference type="ProteomicsDB" id="239039"/>
<dbReference type="EnsemblPlants" id="AT5G47480.1">
    <property type="protein sequence ID" value="AT5G47480.1"/>
    <property type="gene ID" value="AT5G47480"/>
</dbReference>
<dbReference type="GeneID" id="834798"/>
<dbReference type="Gramene" id="AT5G47480.1">
    <property type="protein sequence ID" value="AT5G47480.1"/>
    <property type="gene ID" value="AT5G47480"/>
</dbReference>
<dbReference type="KEGG" id="ath:AT5G47480"/>
<dbReference type="Araport" id="AT5G47480"/>
<dbReference type="TAIR" id="AT5G47480">
    <property type="gene designation" value="MAG5"/>
</dbReference>
<dbReference type="eggNOG" id="KOG1913">
    <property type="taxonomic scope" value="Eukaryota"/>
</dbReference>
<dbReference type="HOGENOM" id="CLU_002428_1_0_1"/>
<dbReference type="InParanoid" id="Q9FGK9"/>
<dbReference type="OMA" id="ERLANWN"/>
<dbReference type="PhylomeDB" id="Q9FGK9"/>
<dbReference type="PRO" id="PR:Q9FGK9"/>
<dbReference type="Proteomes" id="UP000006548">
    <property type="component" value="Chromosome 5"/>
</dbReference>
<dbReference type="ExpressionAtlas" id="Q9FGK9">
    <property type="expression patterns" value="baseline and differential"/>
</dbReference>
<dbReference type="GO" id="GO:0070971">
    <property type="term" value="C:endoplasmic reticulum exit site"/>
    <property type="evidence" value="ECO:0007669"/>
    <property type="project" value="UniProtKB-ARBA"/>
</dbReference>
<dbReference type="GO" id="GO:0005795">
    <property type="term" value="C:Golgi stack"/>
    <property type="evidence" value="ECO:0007669"/>
    <property type="project" value="UniProtKB-SubCell"/>
</dbReference>
<dbReference type="GO" id="GO:0046907">
    <property type="term" value="P:intracellular transport"/>
    <property type="evidence" value="ECO:0007669"/>
    <property type="project" value="UniProtKB-ARBA"/>
</dbReference>
<dbReference type="GO" id="GO:0015031">
    <property type="term" value="P:protein transport"/>
    <property type="evidence" value="ECO:0007669"/>
    <property type="project" value="UniProtKB-KW"/>
</dbReference>
<dbReference type="GO" id="GO:0016192">
    <property type="term" value="P:vesicle-mediated transport"/>
    <property type="evidence" value="ECO:0007669"/>
    <property type="project" value="UniProtKB-KW"/>
</dbReference>
<dbReference type="CDD" id="cd09233">
    <property type="entry name" value="ACE1-Sec16-like"/>
    <property type="match status" value="1"/>
</dbReference>
<dbReference type="Gene3D" id="1.25.40.1030">
    <property type="match status" value="1"/>
</dbReference>
<dbReference type="InterPro" id="IPR024340">
    <property type="entry name" value="Sec16_CCD"/>
</dbReference>
<dbReference type="InterPro" id="IPR024298">
    <property type="entry name" value="Sec16_Sec23-bd"/>
</dbReference>
<dbReference type="PANTHER" id="PTHR13402">
    <property type="entry name" value="RGPR-RELATED"/>
    <property type="match status" value="1"/>
</dbReference>
<dbReference type="PANTHER" id="PTHR13402:SF6">
    <property type="entry name" value="SECRETORY 16, ISOFORM I"/>
    <property type="match status" value="1"/>
</dbReference>
<dbReference type="Pfam" id="PF12932">
    <property type="entry name" value="Sec16"/>
    <property type="match status" value="1"/>
</dbReference>
<dbReference type="Pfam" id="PF12931">
    <property type="entry name" value="TPR_Sec16"/>
    <property type="match status" value="1"/>
</dbReference>
<gene>
    <name evidence="4" type="primary">MAG5</name>
    <name evidence="4" type="synonym">SEC16A</name>
    <name evidence="6" type="ordered locus">At5g47480</name>
    <name evidence="7" type="ORF">MNJ7.7</name>
</gene>
<name>MAG5_ARATH</name>
<evidence type="ECO:0000250" key="1">
    <source>
        <dbReference type="UniProtKB" id="Q9FGK8"/>
    </source>
</evidence>
<evidence type="ECO:0000256" key="2">
    <source>
        <dbReference type="SAM" id="MobiDB-lite"/>
    </source>
</evidence>
<evidence type="ECO:0000269" key="3">
    <source>
    </source>
</evidence>
<evidence type="ECO:0000303" key="4">
    <source>
    </source>
</evidence>
<evidence type="ECO:0000305" key="5"/>
<evidence type="ECO:0000312" key="6">
    <source>
        <dbReference type="Araport" id="AT5G47480"/>
    </source>
</evidence>
<evidence type="ECO:0000312" key="7">
    <source>
        <dbReference type="EMBL" id="BAB09074.1"/>
    </source>
</evidence>
<proteinExistence type="evidence at protein level"/>
<reference key="1">
    <citation type="submission" date="1999-04" db="EMBL/GenBank/DDBJ databases">
        <title>Structural analysis of Arabidopsis thaliana chromosome 5. XI.</title>
        <authorList>
            <person name="Kaneko T."/>
            <person name="Katoh T."/>
            <person name="Asamizu E."/>
            <person name="Sato S."/>
            <person name="Nakamura Y."/>
            <person name="Kotani H."/>
            <person name="Tabata S."/>
        </authorList>
    </citation>
    <scope>NUCLEOTIDE SEQUENCE [LARGE SCALE GENOMIC DNA]</scope>
    <source>
        <strain>cv. Columbia</strain>
    </source>
</reference>
<reference key="2">
    <citation type="journal article" date="2017" name="Plant J.">
        <title>Araport11: a complete reannotation of the Arabidopsis thaliana reference genome.</title>
        <authorList>
            <person name="Cheng C.Y."/>
            <person name="Krishnakumar V."/>
            <person name="Chan A.P."/>
            <person name="Thibaud-Nissen F."/>
            <person name="Schobel S."/>
            <person name="Town C.D."/>
        </authorList>
    </citation>
    <scope>GENOME REANNOTATION</scope>
    <source>
        <strain>cv. Columbia</strain>
    </source>
</reference>
<reference key="3">
    <citation type="journal article" date="2009" name="J. Proteomics">
        <title>Phosphoproteomic analysis of nuclei-enriched fractions from Arabidopsis thaliana.</title>
        <authorList>
            <person name="Jones A.M.E."/>
            <person name="MacLean D."/>
            <person name="Studholme D.J."/>
            <person name="Serna-Sanz A."/>
            <person name="Andreasson E."/>
            <person name="Rathjen J.P."/>
            <person name="Peck S.C."/>
        </authorList>
    </citation>
    <scope>IDENTIFICATION BY MASS SPECTROMETRY [LARGE SCALE ANALYSIS]</scope>
    <source>
        <strain>cv. Columbia</strain>
    </source>
</reference>
<reference key="4">
    <citation type="journal article" date="2009" name="Plant Physiol.">
        <title>Large-scale Arabidopsis phosphoproteome profiling reveals novel chloroplast kinase substrates and phosphorylation networks.</title>
        <authorList>
            <person name="Reiland S."/>
            <person name="Messerli G."/>
            <person name="Baerenfaller K."/>
            <person name="Gerrits B."/>
            <person name="Endler A."/>
            <person name="Grossmann J."/>
            <person name="Gruissem W."/>
            <person name="Baginsky S."/>
        </authorList>
    </citation>
    <scope>IDENTIFICATION BY MASS SPECTROMETRY [LARGE SCALE ANALYSIS]</scope>
</reference>
<reference key="5">
    <citation type="journal article" date="2013" name="Plant Cell">
        <title>MAIGO5 functions in protein export from Golgi-associated endoplasmic reticulum exit sites in Arabidopsis.</title>
        <authorList>
            <person name="Takagi J."/>
            <person name="Renna L."/>
            <person name="Takahashi H."/>
            <person name="Koumoto Y."/>
            <person name="Tamura K."/>
            <person name="Stefano G."/>
            <person name="Fukao Y."/>
            <person name="Kondo M."/>
            <person name="Nishimura M."/>
            <person name="Shimada T."/>
            <person name="Brandizzi F."/>
            <person name="Hara-Nishimura I."/>
        </authorList>
    </citation>
    <scope>IDENTIFICATION BY MASS SPECTROMETRY</scope>
    <scope>FUNCTION</scope>
    <scope>INTERACTION WITH SEC13A; SEC13B AND SEC31A</scope>
    <scope>SUBCELLULAR LOCATION</scope>
    <scope>DISRUPTION PHENOTYPE</scope>
</reference>
<sequence>MASTADFLLDDQTDEDFFDKLVDDSYTPTASSSAKELKFDDGSDSDDAKAFANLSVVDDVLGDGDVALNEAGLGNDVANEGTSGSVGKEEPSSSIAPEAVQFVNSDANRLRDVDVVRSEVDDMALTETGKESNIVDGSGSPGVKEVDWGSFYADSSVNDGGGFGSYSDFFTELDATAGNVQGQAEVAVATGGNLVANDTINTSVGLDNSAGFEQHQGQVQHDSGSGQYVDNSQSWENLYPGWKYDASTGQWYQVDGQDATVNSQESYINSTGNWESVAADNSDVAYLKQSTTSAMAGTAESVSTWNQVSQVGNGYPEHMVFDAQYPGWYYDTIAQEWRSLDSYNQASQTTVTGQAHDQQVQNGHARTTTYHNNSQSSVYDVNNKNQTFKAQDFAIQGQHGSWDESYYANNQQAGNTWQPVNVGKAEPAVTSDSLSRFGGNQQVNNLYSTESVAEQFKPNTIGAQSFIPQHMNVASATQNGPLSFSNDLYNRQQSVDHAQKSFQNNQLFSPSVGRSSDRRPPHALVSFGFGGKLIVMKDNNGSLQNTSFGSQGIGGSSITVLNLAEVISGSASYSSPGEDSLSYFRCLHQQSLPGPLVGGNVGSKELHKWIDERLLHCESSNMDFSRGKLLKMLLSLLRISCQYYGKLRSPFGSDASQKETDTPEAAVAKLFAFAKKDGIQNGYAPISQCLQHLPPESQMQVTASEVQNLLASGRKMEALQCAQEGHLWGPALVIAAQLGDQFYVDTVKQMALRQLIPGSPLRTLCLLVAGQPAEVCPTGSSSSMLDNWEENLGIITANRTTDDDLVIIHLGDSMWKERGEIIAAHICYLIADKNFDPYSESARLCLVGADHWKCPRTYASPDAIQRTELYEYSKTLGNSQYILLPFQPYKIIYAHMLAEVGKLSTAQKYCQAVIRCLKTSRSSEVEMWKQFASSLEERIRSHQEGGNLAPAKLVGKLLNSLWGMPPPAPHSTTGNPQVNEYQHQQQEAAKLSYSQSANTMSSLMPPASIEPVHEWGGNGRTMAAHSRSVSEPDFSRTPIQDQTDSSKDKAPDGVTQVKSTRKVPSSRFSRFGIGILKNTVGKVFPSRSSNEAKLGNENQFYYDDNLKRWVERGVEPPAEEAALPPPPTSVPFRSNSLGHENKSEIKNEMSPSSGSWSSGSPTPSENSPGIPPVSQGSNQFSARGRMGVRARYVDTYNQGSSSMYQSPPVQSSKPPIPAKAKFFVPAAPASFANDQVMESVSAETRQENSGDEAVVGSAGAPGPSQASFQSPTPSPIAMQRFPSVDNIRRSGSGTSLNGDLPQSVSRRTASWSGSVNSSSFMSPTSASTFRPSPLNSSSSSLGEELQEVEL</sequence>
<organism evidence="7">
    <name type="scientific">Arabidopsis thaliana</name>
    <name type="common">Mouse-ear cress</name>
    <dbReference type="NCBI Taxonomy" id="3702"/>
    <lineage>
        <taxon>Eukaryota</taxon>
        <taxon>Viridiplantae</taxon>
        <taxon>Streptophyta</taxon>
        <taxon>Embryophyta</taxon>
        <taxon>Tracheophyta</taxon>
        <taxon>Spermatophyta</taxon>
        <taxon>Magnoliopsida</taxon>
        <taxon>eudicotyledons</taxon>
        <taxon>Gunneridae</taxon>
        <taxon>Pentapetalae</taxon>
        <taxon>rosids</taxon>
        <taxon>malvids</taxon>
        <taxon>Brassicales</taxon>
        <taxon>Brassicaceae</taxon>
        <taxon>Camelineae</taxon>
        <taxon>Arabidopsis</taxon>
    </lineage>
</organism>
<keyword id="KW-0256">Endoplasmic reticulum</keyword>
<keyword id="KW-0931">ER-Golgi transport</keyword>
<keyword id="KW-0333">Golgi apparatus</keyword>
<keyword id="KW-0597">Phosphoprotein</keyword>
<keyword id="KW-0653">Protein transport</keyword>
<keyword id="KW-1185">Reference proteome</keyword>
<keyword id="KW-0813">Transport</keyword>